<comment type="subcellular location">
    <subcellularLocation>
        <location evidence="2">Membrane</location>
        <topology evidence="2">Multi-pass membrane protein</topology>
    </subcellularLocation>
</comment>
<comment type="tissue specificity">
    <text evidence="2">Widely expressed.</text>
</comment>
<comment type="similarity">
    <text evidence="3">Belongs to the UPF0496 family.</text>
</comment>
<comment type="sequence caution" evidence="3">
    <conflict type="erroneous initiation">
        <sequence resource="EMBL-CDS" id="BAC42823"/>
    </conflict>
    <text>Truncated N-terminus.</text>
</comment>
<organism>
    <name type="scientific">Arabidopsis thaliana</name>
    <name type="common">Mouse-ear cress</name>
    <dbReference type="NCBI Taxonomy" id="3702"/>
    <lineage>
        <taxon>Eukaryota</taxon>
        <taxon>Viridiplantae</taxon>
        <taxon>Streptophyta</taxon>
        <taxon>Embryophyta</taxon>
        <taxon>Tracheophyta</taxon>
        <taxon>Spermatophyta</taxon>
        <taxon>Magnoliopsida</taxon>
        <taxon>eudicotyledons</taxon>
        <taxon>Gunneridae</taxon>
        <taxon>Pentapetalae</taxon>
        <taxon>rosids</taxon>
        <taxon>malvids</taxon>
        <taxon>Brassicales</taxon>
        <taxon>Brassicaceae</taxon>
        <taxon>Camelineae</taxon>
        <taxon>Arabidopsis</taxon>
    </lineage>
</organism>
<feature type="chain" id="PRO_0000419524" description="UPF0496 protein At3g28300">
    <location>
        <begin position="1"/>
        <end position="385"/>
    </location>
</feature>
<feature type="transmembrane region" description="Helical" evidence="1">
    <location>
        <begin position="217"/>
        <end position="237"/>
    </location>
</feature>
<feature type="transmembrane region" description="Helical" evidence="1">
    <location>
        <begin position="242"/>
        <end position="262"/>
    </location>
</feature>
<feature type="coiled-coil region" evidence="1">
    <location>
        <begin position="138"/>
        <end position="214"/>
    </location>
</feature>
<feature type="coiled-coil region" evidence="1">
    <location>
        <begin position="267"/>
        <end position="294"/>
    </location>
</feature>
<dbReference type="EMBL" id="AF126374">
    <property type="protein sequence ID" value="AAD26355.1"/>
    <property type="molecule type" value="mRNA"/>
</dbReference>
<dbReference type="EMBL" id="AP002051">
    <property type="protein sequence ID" value="BAB02621.1"/>
    <property type="molecule type" value="Genomic_DNA"/>
</dbReference>
<dbReference type="EMBL" id="CP002686">
    <property type="protein sequence ID" value="AEE77430.1"/>
    <property type="molecule type" value="Genomic_DNA"/>
</dbReference>
<dbReference type="EMBL" id="AY057599">
    <property type="protein sequence ID" value="AAL14394.1"/>
    <property type="molecule type" value="mRNA"/>
</dbReference>
<dbReference type="EMBL" id="AK118201">
    <property type="protein sequence ID" value="BAC42823.1"/>
    <property type="status" value="ALT_INIT"/>
    <property type="molecule type" value="mRNA"/>
</dbReference>
<dbReference type="EMBL" id="AK221728">
    <property type="protein sequence ID" value="BAD93736.1"/>
    <property type="molecule type" value="mRNA"/>
</dbReference>
<dbReference type="RefSeq" id="NP_189470.1">
    <property type="nucleotide sequence ID" value="NM_113749.4"/>
</dbReference>
<dbReference type="SMR" id="P0DI79"/>
<dbReference type="BioGRID" id="7786">
    <property type="interactions" value="2"/>
</dbReference>
<dbReference type="FunCoup" id="P0DI79">
    <property type="interactions" value="1"/>
</dbReference>
<dbReference type="STRING" id="3702.P0DI79"/>
<dbReference type="EnsemblPlants" id="AT3G28290.1">
    <property type="protein sequence ID" value="AT3G28290.1"/>
    <property type="gene ID" value="AT3G28290"/>
</dbReference>
<dbReference type="EnsemblPlants" id="AT3G28300.1">
    <property type="protein sequence ID" value="AT3G28300.1"/>
    <property type="gene ID" value="AT3G28300"/>
</dbReference>
<dbReference type="GeneID" id="822457"/>
<dbReference type="Gramene" id="AT3G28290.1">
    <property type="protein sequence ID" value="AT3G28290.1"/>
    <property type="gene ID" value="AT3G28290"/>
</dbReference>
<dbReference type="Gramene" id="AT3G28300.1">
    <property type="protein sequence ID" value="AT3G28300.1"/>
    <property type="gene ID" value="AT3G28300"/>
</dbReference>
<dbReference type="KEGG" id="ath:AT3G28290"/>
<dbReference type="KEGG" id="ath:AT3G28300"/>
<dbReference type="Araport" id="AT3G28300"/>
<dbReference type="TAIR" id="AT3G28300">
    <property type="gene designation" value="AT14A"/>
</dbReference>
<dbReference type="HOGENOM" id="CLU_044778_1_0_1"/>
<dbReference type="InParanoid" id="P0DI79"/>
<dbReference type="PhylomeDB" id="P0DI79"/>
<dbReference type="PRO" id="PR:P0DI79"/>
<dbReference type="Proteomes" id="UP000006548">
    <property type="component" value="Chromosome 3"/>
</dbReference>
<dbReference type="ExpressionAtlas" id="P0DI79">
    <property type="expression patterns" value="baseline and differential"/>
</dbReference>
<dbReference type="GO" id="GO:0016020">
    <property type="term" value="C:membrane"/>
    <property type="evidence" value="ECO:0007669"/>
    <property type="project" value="UniProtKB-SubCell"/>
</dbReference>
<dbReference type="Gene3D" id="1.20.1170.10">
    <property type="match status" value="1"/>
</dbReference>
<dbReference type="InterPro" id="IPR007749">
    <property type="entry name" value="DUF677"/>
</dbReference>
<dbReference type="PANTHER" id="PTHR31113:SF13">
    <property type="entry name" value="(RAPE) HYPOTHETICAL PROTEIN"/>
    <property type="match status" value="1"/>
</dbReference>
<dbReference type="PANTHER" id="PTHR31113">
    <property type="entry name" value="UPF0496 PROTEIN 3-RELATED"/>
    <property type="match status" value="1"/>
</dbReference>
<dbReference type="Pfam" id="PF05055">
    <property type="entry name" value="DUF677"/>
    <property type="match status" value="1"/>
</dbReference>
<sequence>MVLSKENMLKYSAHLRAYNSACGDHPELKSFDSELQQKTSNLINSFTSDAKTGLVPLPQHAAYKEFTKHLAEVNQQVSDYIIGYGEVVWENSTLRSLVETYFESAKKTLDIAENVTEYVDEAKRGERYIVAAVAQFEKDKENDVGKKTKRYENTLRELKKFEAMGNPFDGDKFTTLFKLMHKEQESLLERVRETKEKLDEELKNIEMEISSRKKWSIISNVLFIGAFVAVAVGSMVLVCTGVGAGVGVAGLLSLPLIAIGWVGVHTILENKIQAREKQEEALKKAHRIANEMDKGMETDKVDMNSISGKVHALKSKITSMLNAVKDATEDGANEVDTKQVMETLTGDVVELTEDIKAVGDDVAKYSKMIEETSYHVLQKITGSGK</sequence>
<accession>P0DI79</accession>
<accession>Q56XE6</accession>
<accession>Q8GXJ7</accession>
<accession>Q9XF11</accession>
<evidence type="ECO:0000255" key="1"/>
<evidence type="ECO:0000269" key="2">
    <source>
    </source>
</evidence>
<evidence type="ECO:0000305" key="3"/>
<proteinExistence type="evidence at transcript level"/>
<keyword id="KW-0175">Coiled coil</keyword>
<keyword id="KW-0472">Membrane</keyword>
<keyword id="KW-1185">Reference proteome</keyword>
<keyword id="KW-0812">Transmembrane</keyword>
<keyword id="KW-1133">Transmembrane helix</keyword>
<protein>
    <recommendedName>
        <fullName>UPF0496 protein At3g28300</fullName>
    </recommendedName>
    <alternativeName>
        <fullName>Protein At14a</fullName>
    </alternativeName>
</protein>
<reference key="1">
    <citation type="journal article" date="1999" name="Gene">
        <title>Isolation and characterization of a cDNA clone from Arabidopsis thaliana with partial sequence similarity to integrins.</title>
        <authorList>
            <person name="Nagpal P."/>
            <person name="Quatrano R.S."/>
        </authorList>
    </citation>
    <scope>NUCLEOTIDE SEQUENCE [MRNA]</scope>
    <scope>TISSUE SPECIFICITY</scope>
    <scope>SUBCELLULAR LOCATION</scope>
    <source>
        <strain>cv. Columbia</strain>
    </source>
</reference>
<reference key="2">
    <citation type="journal article" date="2000" name="DNA Res.">
        <title>Structural analysis of Arabidopsis thaliana chromosome 3. II. Sequence features of the 4,251,695 bp regions covered by 90 P1, TAC and BAC clones.</title>
        <authorList>
            <person name="Kaneko T."/>
            <person name="Katoh T."/>
            <person name="Sato S."/>
            <person name="Nakamura Y."/>
            <person name="Asamizu E."/>
            <person name="Tabata S."/>
        </authorList>
    </citation>
    <scope>NUCLEOTIDE SEQUENCE [LARGE SCALE GENOMIC DNA]</scope>
    <source>
        <strain>cv. Columbia</strain>
    </source>
</reference>
<reference key="3">
    <citation type="journal article" date="2017" name="Plant J.">
        <title>Araport11: a complete reannotation of the Arabidopsis thaliana reference genome.</title>
        <authorList>
            <person name="Cheng C.Y."/>
            <person name="Krishnakumar V."/>
            <person name="Chan A.P."/>
            <person name="Thibaud-Nissen F."/>
            <person name="Schobel S."/>
            <person name="Town C.D."/>
        </authorList>
    </citation>
    <scope>GENOME REANNOTATION</scope>
    <source>
        <strain>cv. Columbia</strain>
    </source>
</reference>
<reference key="4">
    <citation type="journal article" date="2003" name="Science">
        <title>Empirical analysis of transcriptional activity in the Arabidopsis genome.</title>
        <authorList>
            <person name="Yamada K."/>
            <person name="Lim J."/>
            <person name="Dale J.M."/>
            <person name="Chen H."/>
            <person name="Shinn P."/>
            <person name="Palm C.J."/>
            <person name="Southwick A.M."/>
            <person name="Wu H.C."/>
            <person name="Kim C.J."/>
            <person name="Nguyen M."/>
            <person name="Pham P.K."/>
            <person name="Cheuk R.F."/>
            <person name="Karlin-Newmann G."/>
            <person name="Liu S.X."/>
            <person name="Lam B."/>
            <person name="Sakano H."/>
            <person name="Wu T."/>
            <person name="Yu G."/>
            <person name="Miranda M."/>
            <person name="Quach H.L."/>
            <person name="Tripp M."/>
            <person name="Chang C.H."/>
            <person name="Lee J.M."/>
            <person name="Toriumi M.J."/>
            <person name="Chan M.M."/>
            <person name="Tang C.C."/>
            <person name="Onodera C.S."/>
            <person name="Deng J.M."/>
            <person name="Akiyama K."/>
            <person name="Ansari Y."/>
            <person name="Arakawa T."/>
            <person name="Banh J."/>
            <person name="Banno F."/>
            <person name="Bowser L."/>
            <person name="Brooks S.Y."/>
            <person name="Carninci P."/>
            <person name="Chao Q."/>
            <person name="Choy N."/>
            <person name="Enju A."/>
            <person name="Goldsmith A.D."/>
            <person name="Gurjal M."/>
            <person name="Hansen N.F."/>
            <person name="Hayashizaki Y."/>
            <person name="Johnson-Hopson C."/>
            <person name="Hsuan V.W."/>
            <person name="Iida K."/>
            <person name="Karnes M."/>
            <person name="Khan S."/>
            <person name="Koesema E."/>
            <person name="Ishida J."/>
            <person name="Jiang P.X."/>
            <person name="Jones T."/>
            <person name="Kawai J."/>
            <person name="Kamiya A."/>
            <person name="Meyers C."/>
            <person name="Nakajima M."/>
            <person name="Narusaka M."/>
            <person name="Seki M."/>
            <person name="Sakurai T."/>
            <person name="Satou M."/>
            <person name="Tamse R."/>
            <person name="Vaysberg M."/>
            <person name="Wallender E.K."/>
            <person name="Wong C."/>
            <person name="Yamamura Y."/>
            <person name="Yuan S."/>
            <person name="Shinozaki K."/>
            <person name="Davis R.W."/>
            <person name="Theologis A."/>
            <person name="Ecker J.R."/>
        </authorList>
    </citation>
    <scope>NUCLEOTIDE SEQUENCE [LARGE SCALE MRNA]</scope>
    <source>
        <strain>cv. Columbia</strain>
    </source>
</reference>
<reference key="5">
    <citation type="journal article" date="2002" name="Science">
        <title>Functional annotation of a full-length Arabidopsis cDNA collection.</title>
        <authorList>
            <person name="Seki M."/>
            <person name="Narusaka M."/>
            <person name="Kamiya A."/>
            <person name="Ishida J."/>
            <person name="Satou M."/>
            <person name="Sakurai T."/>
            <person name="Nakajima M."/>
            <person name="Enju A."/>
            <person name="Akiyama K."/>
            <person name="Oono Y."/>
            <person name="Muramatsu M."/>
            <person name="Hayashizaki Y."/>
            <person name="Kawai J."/>
            <person name="Carninci P."/>
            <person name="Itoh M."/>
            <person name="Ishii Y."/>
            <person name="Arakawa T."/>
            <person name="Shibata K."/>
            <person name="Shinagawa A."/>
            <person name="Shinozaki K."/>
        </authorList>
    </citation>
    <scope>NUCLEOTIDE SEQUENCE [LARGE SCALE MRNA] OF 19-385</scope>
    <source>
        <strain>cv. Columbia</strain>
    </source>
</reference>
<reference key="6">
    <citation type="submission" date="2005-03" db="EMBL/GenBank/DDBJ databases">
        <title>Large-scale analysis of RIKEN Arabidopsis full-length (RAFL) cDNAs.</title>
        <authorList>
            <person name="Totoki Y."/>
            <person name="Seki M."/>
            <person name="Ishida J."/>
            <person name="Nakajima M."/>
            <person name="Enju A."/>
            <person name="Kamiya A."/>
            <person name="Narusaka M."/>
            <person name="Shin-i T."/>
            <person name="Nakagawa M."/>
            <person name="Sakamoto N."/>
            <person name="Oishi K."/>
            <person name="Kohara Y."/>
            <person name="Kobayashi M."/>
            <person name="Toyoda A."/>
            <person name="Sakaki Y."/>
            <person name="Sakurai T."/>
            <person name="Iida K."/>
            <person name="Akiyama K."/>
            <person name="Satou M."/>
            <person name="Toyoda T."/>
            <person name="Konagaya A."/>
            <person name="Carninci P."/>
            <person name="Kawai J."/>
            <person name="Hayashizaki Y."/>
            <person name="Shinozaki K."/>
        </authorList>
    </citation>
    <scope>NUCLEOTIDE SEQUENCE [LARGE SCALE MRNA] OF 19-385</scope>
    <source>
        <strain>cv. Columbia</strain>
    </source>
</reference>
<name>U496P_ARATH</name>
<gene>
    <name type="ordered locus">At3g28300</name>
    <name type="ORF">MZF16.9</name>
</gene>